<keyword id="KW-0067">ATP-binding</keyword>
<keyword id="KW-0963">Cytoplasm</keyword>
<keyword id="KW-0237">DNA synthesis</keyword>
<keyword id="KW-0418">Kinase</keyword>
<keyword id="KW-0479">Metal-binding</keyword>
<keyword id="KW-0547">Nucleotide-binding</keyword>
<keyword id="KW-0808">Transferase</keyword>
<keyword id="KW-0862">Zinc</keyword>
<name>KITH_LACJO</name>
<feature type="chain" id="PRO_0000174982" description="Thymidine kinase">
    <location>
        <begin position="1"/>
        <end position="199"/>
    </location>
</feature>
<feature type="active site" description="Proton acceptor" evidence="1">
    <location>
        <position position="94"/>
    </location>
</feature>
<feature type="binding site" evidence="1">
    <location>
        <begin position="9"/>
        <end position="16"/>
    </location>
    <ligand>
        <name>ATP</name>
        <dbReference type="ChEBI" id="CHEBI:30616"/>
    </ligand>
</feature>
<feature type="binding site" evidence="1">
    <location>
        <begin position="93"/>
        <end position="96"/>
    </location>
    <ligand>
        <name>ATP</name>
        <dbReference type="ChEBI" id="CHEBI:30616"/>
    </ligand>
</feature>
<feature type="binding site" evidence="1">
    <location>
        <position position="151"/>
    </location>
    <ligand>
        <name>Zn(2+)</name>
        <dbReference type="ChEBI" id="CHEBI:29105"/>
    </ligand>
</feature>
<feature type="binding site" evidence="1">
    <location>
        <position position="154"/>
    </location>
    <ligand>
        <name>Zn(2+)</name>
        <dbReference type="ChEBI" id="CHEBI:29105"/>
    </ligand>
</feature>
<feature type="binding site" evidence="1">
    <location>
        <position position="188"/>
    </location>
    <ligand>
        <name>Zn(2+)</name>
        <dbReference type="ChEBI" id="CHEBI:29105"/>
    </ligand>
</feature>
<feature type="binding site" evidence="1">
    <location>
        <position position="191"/>
    </location>
    <ligand>
        <name>Zn(2+)</name>
        <dbReference type="ChEBI" id="CHEBI:29105"/>
    </ligand>
</feature>
<accession>Q74K26</accession>
<sequence>MAQLFFRYGAMSSGKSIEILKVAHNYEAQGRKIALMTSNVDDRSGVGTVASRIGLHRKAVPISEDLDLFNYVSELNKSDVESGNGRVACVLIDEAQFLKRHHVLECAKIVDELKIPVMAFGLKNDFQNHLFEGSENLLIFADKVEEMKTICHYCGHKATMNLRINSGKPVYEGEQVQIGGDESYYPVCRFHYFHPNKQR</sequence>
<proteinExistence type="inferred from homology"/>
<reference key="1">
    <citation type="journal article" date="2004" name="Proc. Natl. Acad. Sci. U.S.A.">
        <title>The genome sequence of the probiotic intestinal bacterium Lactobacillus johnsonii NCC 533.</title>
        <authorList>
            <person name="Pridmore R.D."/>
            <person name="Berger B."/>
            <person name="Desiere F."/>
            <person name="Vilanova D."/>
            <person name="Barretto C."/>
            <person name="Pittet A.-C."/>
            <person name="Zwahlen M.-C."/>
            <person name="Rouvet M."/>
            <person name="Altermann E."/>
            <person name="Barrangou R."/>
            <person name="Mollet B."/>
            <person name="Mercenier A."/>
            <person name="Klaenhammer T."/>
            <person name="Arigoni F."/>
            <person name="Schell M.A."/>
        </authorList>
    </citation>
    <scope>NUCLEOTIDE SEQUENCE [LARGE SCALE GENOMIC DNA]</scope>
    <source>
        <strain>CNCM I-1225 / La1 / NCC 533</strain>
    </source>
</reference>
<comment type="catalytic activity">
    <reaction evidence="1">
        <text>thymidine + ATP = dTMP + ADP + H(+)</text>
        <dbReference type="Rhea" id="RHEA:19129"/>
        <dbReference type="ChEBI" id="CHEBI:15378"/>
        <dbReference type="ChEBI" id="CHEBI:17748"/>
        <dbReference type="ChEBI" id="CHEBI:30616"/>
        <dbReference type="ChEBI" id="CHEBI:63528"/>
        <dbReference type="ChEBI" id="CHEBI:456216"/>
        <dbReference type="EC" id="2.7.1.21"/>
    </reaction>
</comment>
<comment type="subunit">
    <text evidence="1">Homotetramer.</text>
</comment>
<comment type="subcellular location">
    <subcellularLocation>
        <location evidence="1">Cytoplasm</location>
    </subcellularLocation>
</comment>
<comment type="similarity">
    <text evidence="1">Belongs to the thymidine kinase family.</text>
</comment>
<protein>
    <recommendedName>
        <fullName evidence="1">Thymidine kinase</fullName>
        <ecNumber evidence="1">2.7.1.21</ecNumber>
    </recommendedName>
</protein>
<evidence type="ECO:0000255" key="1">
    <source>
        <dbReference type="HAMAP-Rule" id="MF_00124"/>
    </source>
</evidence>
<organism>
    <name type="scientific">Lactobacillus johnsonii (strain CNCM I-12250 / La1 / NCC 533)</name>
    <dbReference type="NCBI Taxonomy" id="257314"/>
    <lineage>
        <taxon>Bacteria</taxon>
        <taxon>Bacillati</taxon>
        <taxon>Bacillota</taxon>
        <taxon>Bacilli</taxon>
        <taxon>Lactobacillales</taxon>
        <taxon>Lactobacillaceae</taxon>
        <taxon>Lactobacillus</taxon>
    </lineage>
</organism>
<gene>
    <name evidence="1" type="primary">tdk</name>
    <name type="ordered locus">LJ_0929</name>
</gene>
<dbReference type="EC" id="2.7.1.21" evidence="1"/>
<dbReference type="EMBL" id="AE017198">
    <property type="protein sequence ID" value="AAS08750.1"/>
    <property type="molecule type" value="Genomic_DNA"/>
</dbReference>
<dbReference type="RefSeq" id="WP_004897620.1">
    <property type="nucleotide sequence ID" value="NC_005362.1"/>
</dbReference>
<dbReference type="SMR" id="Q74K26"/>
<dbReference type="KEGG" id="ljo:LJ_0929"/>
<dbReference type="eggNOG" id="COG1435">
    <property type="taxonomic scope" value="Bacteria"/>
</dbReference>
<dbReference type="HOGENOM" id="CLU_064400_2_2_9"/>
<dbReference type="Proteomes" id="UP000000581">
    <property type="component" value="Chromosome"/>
</dbReference>
<dbReference type="GO" id="GO:0005829">
    <property type="term" value="C:cytosol"/>
    <property type="evidence" value="ECO:0007669"/>
    <property type="project" value="TreeGrafter"/>
</dbReference>
<dbReference type="GO" id="GO:0005524">
    <property type="term" value="F:ATP binding"/>
    <property type="evidence" value="ECO:0007669"/>
    <property type="project" value="UniProtKB-UniRule"/>
</dbReference>
<dbReference type="GO" id="GO:0004797">
    <property type="term" value="F:thymidine kinase activity"/>
    <property type="evidence" value="ECO:0007669"/>
    <property type="project" value="UniProtKB-UniRule"/>
</dbReference>
<dbReference type="GO" id="GO:0008270">
    <property type="term" value="F:zinc ion binding"/>
    <property type="evidence" value="ECO:0007669"/>
    <property type="project" value="UniProtKB-UniRule"/>
</dbReference>
<dbReference type="GO" id="GO:0071897">
    <property type="term" value="P:DNA biosynthetic process"/>
    <property type="evidence" value="ECO:0007669"/>
    <property type="project" value="UniProtKB-KW"/>
</dbReference>
<dbReference type="GO" id="GO:0046104">
    <property type="term" value="P:thymidine metabolic process"/>
    <property type="evidence" value="ECO:0007669"/>
    <property type="project" value="TreeGrafter"/>
</dbReference>
<dbReference type="Gene3D" id="3.30.60.20">
    <property type="match status" value="1"/>
</dbReference>
<dbReference type="Gene3D" id="3.40.50.300">
    <property type="entry name" value="P-loop containing nucleotide triphosphate hydrolases"/>
    <property type="match status" value="1"/>
</dbReference>
<dbReference type="HAMAP" id="MF_00124">
    <property type="entry name" value="Thymidine_kinase"/>
    <property type="match status" value="1"/>
</dbReference>
<dbReference type="InterPro" id="IPR027417">
    <property type="entry name" value="P-loop_NTPase"/>
</dbReference>
<dbReference type="InterPro" id="IPR001267">
    <property type="entry name" value="Thymidine_kinase"/>
</dbReference>
<dbReference type="InterPro" id="IPR020633">
    <property type="entry name" value="Thymidine_kinase_CS"/>
</dbReference>
<dbReference type="NCBIfam" id="NF003299">
    <property type="entry name" value="PRK04296.1-4"/>
    <property type="match status" value="1"/>
</dbReference>
<dbReference type="NCBIfam" id="NF003300">
    <property type="entry name" value="PRK04296.1-5"/>
    <property type="match status" value="1"/>
</dbReference>
<dbReference type="PANTHER" id="PTHR11441">
    <property type="entry name" value="THYMIDINE KINASE"/>
    <property type="match status" value="1"/>
</dbReference>
<dbReference type="PANTHER" id="PTHR11441:SF0">
    <property type="entry name" value="THYMIDINE KINASE, CYTOSOLIC"/>
    <property type="match status" value="1"/>
</dbReference>
<dbReference type="Pfam" id="PF00265">
    <property type="entry name" value="TK"/>
    <property type="match status" value="1"/>
</dbReference>
<dbReference type="PIRSF" id="PIRSF035805">
    <property type="entry name" value="TK_cell"/>
    <property type="match status" value="1"/>
</dbReference>
<dbReference type="SUPFAM" id="SSF57716">
    <property type="entry name" value="Glucocorticoid receptor-like (DNA-binding domain)"/>
    <property type="match status" value="1"/>
</dbReference>
<dbReference type="SUPFAM" id="SSF52540">
    <property type="entry name" value="P-loop containing nucleoside triphosphate hydrolases"/>
    <property type="match status" value="1"/>
</dbReference>
<dbReference type="PROSITE" id="PS00603">
    <property type="entry name" value="TK_CELLULAR_TYPE"/>
    <property type="match status" value="1"/>
</dbReference>